<sequence length="44" mass="5043">MRDLKTYLSVAPVLSTLWFGSLAGLLIEINRFFPDALTFPFFSF</sequence>
<geneLocation type="chloroplast"/>
<protein>
    <recommendedName>
        <fullName evidence="1">Photosystem I reaction center subunit IX</fullName>
    </recommendedName>
    <alternativeName>
        <fullName evidence="1">PSI-J</fullName>
    </alternativeName>
</protein>
<gene>
    <name evidence="1" type="primary">psaJ</name>
</gene>
<organism>
    <name type="scientific">Lactuca sativa</name>
    <name type="common">Garden lettuce</name>
    <dbReference type="NCBI Taxonomy" id="4236"/>
    <lineage>
        <taxon>Eukaryota</taxon>
        <taxon>Viridiplantae</taxon>
        <taxon>Streptophyta</taxon>
        <taxon>Embryophyta</taxon>
        <taxon>Tracheophyta</taxon>
        <taxon>Spermatophyta</taxon>
        <taxon>Magnoliopsida</taxon>
        <taxon>eudicotyledons</taxon>
        <taxon>Gunneridae</taxon>
        <taxon>Pentapetalae</taxon>
        <taxon>asterids</taxon>
        <taxon>campanulids</taxon>
        <taxon>Asterales</taxon>
        <taxon>Asteraceae</taxon>
        <taxon>Cichorioideae</taxon>
        <taxon>Cichorieae</taxon>
        <taxon>Lactucinae</taxon>
        <taxon>Lactuca</taxon>
    </lineage>
</organism>
<name>PSAJ_LACSA</name>
<evidence type="ECO:0000255" key="1">
    <source>
        <dbReference type="HAMAP-Rule" id="MF_00522"/>
    </source>
</evidence>
<keyword id="KW-0150">Chloroplast</keyword>
<keyword id="KW-0472">Membrane</keyword>
<keyword id="KW-0602">Photosynthesis</keyword>
<keyword id="KW-0603">Photosystem I</keyword>
<keyword id="KW-0934">Plastid</keyword>
<keyword id="KW-0793">Thylakoid</keyword>
<keyword id="KW-0812">Transmembrane</keyword>
<keyword id="KW-1133">Transmembrane helix</keyword>
<dbReference type="EMBL" id="AP007232">
    <property type="protein sequence ID" value="BAE47614.1"/>
    <property type="molecule type" value="Genomic_DNA"/>
</dbReference>
<dbReference type="EMBL" id="DQ383816">
    <property type="protein sequence ID" value="ABD47253.1"/>
    <property type="molecule type" value="Genomic_DNA"/>
</dbReference>
<dbReference type="RefSeq" id="YP_398349.1">
    <property type="nucleotide sequence ID" value="NC_007578.1"/>
</dbReference>
<dbReference type="SMR" id="Q332V8"/>
<dbReference type="GeneID" id="3772865"/>
<dbReference type="KEGG" id="lsv:3772865"/>
<dbReference type="OrthoDB" id="1844838at2759"/>
<dbReference type="GO" id="GO:0009535">
    <property type="term" value="C:chloroplast thylakoid membrane"/>
    <property type="evidence" value="ECO:0007669"/>
    <property type="project" value="UniProtKB-SubCell"/>
</dbReference>
<dbReference type="GO" id="GO:0009522">
    <property type="term" value="C:photosystem I"/>
    <property type="evidence" value="ECO:0007669"/>
    <property type="project" value="UniProtKB-KW"/>
</dbReference>
<dbReference type="GO" id="GO:0015979">
    <property type="term" value="P:photosynthesis"/>
    <property type="evidence" value="ECO:0007669"/>
    <property type="project" value="UniProtKB-UniRule"/>
</dbReference>
<dbReference type="FunFam" id="1.20.5.510:FF:000001">
    <property type="entry name" value="Photosystem I reaction center subunit IX"/>
    <property type="match status" value="1"/>
</dbReference>
<dbReference type="Gene3D" id="1.20.5.510">
    <property type="entry name" value="Single helix bin"/>
    <property type="match status" value="1"/>
</dbReference>
<dbReference type="HAMAP" id="MF_00522">
    <property type="entry name" value="PSI_PsaJ"/>
    <property type="match status" value="1"/>
</dbReference>
<dbReference type="InterPro" id="IPR002615">
    <property type="entry name" value="PSI_PsaJ"/>
</dbReference>
<dbReference type="InterPro" id="IPR036062">
    <property type="entry name" value="PSI_PsaJ_sf"/>
</dbReference>
<dbReference type="PANTHER" id="PTHR36082">
    <property type="match status" value="1"/>
</dbReference>
<dbReference type="PANTHER" id="PTHR36082:SF2">
    <property type="entry name" value="PHOTOSYSTEM I REACTION CENTER SUBUNIT IX"/>
    <property type="match status" value="1"/>
</dbReference>
<dbReference type="Pfam" id="PF01701">
    <property type="entry name" value="PSI_PsaJ"/>
    <property type="match status" value="1"/>
</dbReference>
<dbReference type="SUPFAM" id="SSF81544">
    <property type="entry name" value="Subunit IX of photosystem I reaction centre, PsaJ"/>
    <property type="match status" value="1"/>
</dbReference>
<accession>Q332V8</accession>
<reference key="1">
    <citation type="journal article" date="2006" name="Transgenic Res.">
        <title>Efficient and stable transformation of Lactuca sativa L. cv. Cisco (lettuce) plastids.</title>
        <authorList>
            <person name="Kanamoto H."/>
            <person name="Yamashita A."/>
            <person name="Asao H."/>
            <person name="Okumura S."/>
            <person name="Takase H."/>
            <person name="Hattori M."/>
            <person name="Yokota A."/>
            <person name="Tomizawa K."/>
        </authorList>
    </citation>
    <scope>NUCLEOTIDE SEQUENCE [LARGE SCALE GENOMIC DNA]</scope>
    <source>
        <strain>cv. Cisco</strain>
    </source>
</reference>
<reference key="2">
    <citation type="submission" date="2006-01" db="EMBL/GenBank/DDBJ databases">
        <title>A comparison of the first two published chloroplast genomes in Asteraceae: Lactuca and Helianthus.</title>
        <authorList>
            <person name="Timme R.E."/>
            <person name="Kuehl J.V."/>
            <person name="Boore J.L."/>
            <person name="Jansen R.K."/>
        </authorList>
    </citation>
    <scope>NUCLEOTIDE SEQUENCE [LARGE SCALE GENOMIC DNA]</scope>
    <source>
        <strain>cv. Salinas</strain>
    </source>
</reference>
<proteinExistence type="inferred from homology"/>
<comment type="function">
    <text evidence="1">May help in the organization of the PsaE and PsaF subunits.</text>
</comment>
<comment type="subcellular location">
    <subcellularLocation>
        <location evidence="1">Plastid</location>
        <location evidence="1">Chloroplast thylakoid membrane</location>
        <topology evidence="1">Single-pass membrane protein</topology>
    </subcellularLocation>
</comment>
<comment type="similarity">
    <text evidence="1">Belongs to the PsaJ family.</text>
</comment>
<feature type="chain" id="PRO_0000276062" description="Photosystem I reaction center subunit IX">
    <location>
        <begin position="1"/>
        <end position="44"/>
    </location>
</feature>
<feature type="transmembrane region" description="Helical" evidence="1">
    <location>
        <begin position="7"/>
        <end position="27"/>
    </location>
</feature>